<comment type="function">
    <text evidence="1 2">Capsid protein that self-associates to form pentons, building the capsid in association with hexamers of the major capsid protein and one dodecamer of the portal protein. The capsid vertex protein self-associates to form 11 pentons, building the T=13 laevo capsid in association with 160 hexamers of the major capsid protein.</text>
</comment>
<comment type="subunit">
    <text evidence="2">Homopentamer. Interacts with the portal protein. Interacts with the major capsid protein that forms hexamers.</text>
</comment>
<comment type="subcellular location">
    <molecule>Capsid vertex protein</molecule>
    <subcellularLocation>
        <location>Virion</location>
    </subcellularLocation>
    <text evidence="1 2">Part of the capsid icosahedric shell of the immature virion. The capsid contains 55 copies.</text>
</comment>
<comment type="subcellular location">
    <molecule>Mature capsid vertex protein</molecule>
    <subcellularLocation>
        <location>Virion</location>
    </subcellularLocation>
    <text evidence="1 2">Part of the capsid icosahedric shell of the mature virion. The capsid contains 55 copies.</text>
</comment>
<comment type="PTM">
    <text evidence="2">Proteolytic cleavage at the N-terminus by the prohead core protein protease gives rise to the mature capsid vertex protein.</text>
</comment>
<comment type="similarity">
    <text evidence="3">Belongs to the Tevenvirinae capsid vertex family.</text>
</comment>
<evidence type="ECO:0000250" key="1">
    <source>
        <dbReference type="UniProtKB" id="P19896"/>
    </source>
</evidence>
<evidence type="ECO:0000255" key="2">
    <source>
        <dbReference type="HAMAP-Rule" id="MF_04113"/>
    </source>
</evidence>
<evidence type="ECO:0000305" key="3"/>
<evidence type="ECO:0000312" key="4">
    <source>
        <dbReference type="EMBL" id="BAI83187.1"/>
    </source>
</evidence>
<organismHost>
    <name type="scientific">Escherichia coli O157:H7</name>
    <dbReference type="NCBI Taxonomy" id="83334"/>
</organismHost>
<name>CAPSP_BPAR1</name>
<accession>D4Z9X5</accession>
<proteinExistence type="inferred from homology"/>
<keyword id="KW-0167">Capsid protein</keyword>
<keyword id="KW-0426">Late protein</keyword>
<keyword id="KW-0946">Virion</keyword>
<gene>
    <name evidence="4" type="primary">24</name>
    <name evidence="4" type="ordered locus">AR1_179</name>
</gene>
<reference key="1">
    <citation type="journal article" date="1998" name="J. Biomed. Sci.">
        <title>Characterization of a phage specific to hemorrhagic Escherichia coli O157:H7 and disclosure of variations in host outer membrane protein ompC.</title>
        <authorList>
            <person name="Yu S.L."/>
            <person name="Ding H.C."/>
            <person name="Seah J.N."/>
            <person name="Wu K.M."/>
            <person name="Chang Y.C."/>
            <person name="Chang K.S."/>
            <person name="Tam M.F."/>
            <person name="Syu W.J."/>
        </authorList>
    </citation>
    <scope>NUCLEOTIDE SEQUENCE [LARGE SCALE GENOMIC DNA]</scope>
    <source>
        <strain>AR1</strain>
    </source>
</reference>
<reference key="2">
    <citation type="journal article" date="2000" name="J. Bacteriol.">
        <title>Characterization of the distal tail fiber locus and determination of the receptor for phage AR1, which specifically infects Escherichia coli O157:H7.</title>
        <authorList>
            <person name="Yu S.L."/>
            <person name="Ko K.L."/>
            <person name="Chen C.S."/>
            <person name="Chang Y.C."/>
            <person name="Syu W.J."/>
        </authorList>
    </citation>
    <scope>NUCLEOTIDE SEQUENCE [LARGE SCALE GENOMIC DNA]</scope>
    <source>
        <strain>AR1</strain>
    </source>
</reference>
<reference key="3">
    <citation type="journal article" date="2002" name="J. Food Prot.">
        <title>A conductance method for the identification of Escherichia coli O157:H7 using bacteriophage AR1.</title>
        <authorList>
            <person name="Chang T.C."/>
            <person name="Ding H.C."/>
            <person name="Chen S.W."/>
        </authorList>
    </citation>
    <scope>NUCLEOTIDE SEQUENCE [LARGE SCALE GENOMIC DNA]</scope>
    <source>
        <strain>AR1</strain>
    </source>
</reference>
<reference key="4">
    <citation type="journal article" date="2002" name="J. Microbiol. Immunol. Infect.">
        <title>Analysis of the baseplate region of phage AR1 that specifically infects Escherichia coli O157:H7.</title>
        <authorList>
            <person name="Liao C.P."/>
            <person name="Syu W.J."/>
        </authorList>
    </citation>
    <scope>NUCLEOTIDE SEQUENCE [LARGE SCALE GENOMIC DNA]</scope>
    <source>
        <strain>AR1</strain>
    </source>
</reference>
<reference key="5">
    <citation type="journal article" date="2003" name="Appl. Environ. Microbiol.">
        <title>Morphological, host range, and genetic characterization of two coliphages.</title>
        <authorList>
            <person name="Goodridge L."/>
            <person name="Gallaccio A."/>
            <person name="Griffiths M.W."/>
        </authorList>
    </citation>
    <scope>NUCLEOTIDE SEQUENCE [LARGE SCALE GENOMIC DNA]</scope>
    <source>
        <strain>AR1</strain>
    </source>
</reference>
<reference key="6">
    <citation type="journal article" date="2011" name="J. Virol.">
        <title>T4-Like genome organization of the Escherichia coli O157:H7 lytic phage AR1.</title>
        <authorList>
            <person name="Liao W.-C."/>
            <person name="Ng W.V."/>
            <person name="Lin I.-H."/>
            <person name="Syu W.-J."/>
            <person name="Liu T.-T."/>
            <person name="Chang C.-H."/>
        </authorList>
    </citation>
    <scope>NUCLEOTIDE SEQUENCE [LARGE SCALE GENOMIC DNA]</scope>
    <source>
        <strain>AR1</strain>
    </source>
</reference>
<sequence>MAKINELLRESTTTNSNSIGRPNLVALTRATTKLIYSDIVATQRTNQPVAAFYGIKYLNPDNEFTFKTGATYAGEAGYVDREQITELTEESKLTLNKGDLFKYNNIVYKVLEDTPFADIEESDLELALQIAIVLLKVRLFSDAASTSKFESSDSEIADARFQINKWQTAVKSRKLKTGITVELAQDLEANGFDAPNFLEDLLATEMADEINKDILQSLITVSKRYKVTGITDTGFIDLSYASAPEAGRSLYRMVCEMVSHIQKESTYTATFCVASARAAAILAASGWLKHKPEDDKYLSQNAYGFLANGLPLYCDTNSPLDYVIVGVVENIGEKEIVGSIFYAPYTEGLDLDDPEHVGAFKVVVDPESLQPSIGLLVRYALSANPYTVAKDEKEARVIDGGDMDKMAGRSDLSVLLGVKLPKIIIDE</sequence>
<feature type="chain" id="PRO_0000432342" description="Capsid vertex protein">
    <location>
        <begin position="1"/>
        <end position="427"/>
    </location>
</feature>
<feature type="chain" id="PRO_0000432343" description="Mature capsid vertex protein">
    <location>
        <begin position="11"/>
        <end position="427"/>
    </location>
</feature>
<feature type="site" description="Cleavage" evidence="1 2">
    <location>
        <begin position="10"/>
        <end position="11"/>
    </location>
</feature>
<organism>
    <name type="scientific">Escherichia phage AR1</name>
    <name type="common">Bacteriophage AR1</name>
    <dbReference type="NCBI Taxonomy" id="66711"/>
    <lineage>
        <taxon>Viruses</taxon>
        <taxon>Duplodnaviria</taxon>
        <taxon>Heunggongvirae</taxon>
        <taxon>Uroviricota</taxon>
        <taxon>Caudoviricetes</taxon>
        <taxon>Straboviridae</taxon>
        <taxon>Tevenvirinae</taxon>
        <taxon>Tequatrovirus</taxon>
        <taxon>Tequatrovirus ar1</taxon>
    </lineage>
</organism>
<dbReference type="EMBL" id="AP011113">
    <property type="protein sequence ID" value="BAI83187.1"/>
    <property type="molecule type" value="Genomic_DNA"/>
</dbReference>
<dbReference type="RefSeq" id="YP_009167990.1">
    <property type="nucleotide sequence ID" value="NC_027983.1"/>
</dbReference>
<dbReference type="SMR" id="D4Z9X5"/>
<dbReference type="GeneID" id="26041919"/>
<dbReference type="KEGG" id="vg:26041919"/>
<dbReference type="Proteomes" id="UP000007649">
    <property type="component" value="Genome"/>
</dbReference>
<dbReference type="GO" id="GO:0019028">
    <property type="term" value="C:viral capsid"/>
    <property type="evidence" value="ECO:0007669"/>
    <property type="project" value="UniProtKB-UniRule"/>
</dbReference>
<dbReference type="FunFam" id="2.10.10.40:FF:000001">
    <property type="entry name" value="Capsid vertex protein"/>
    <property type="match status" value="1"/>
</dbReference>
<dbReference type="FunFam" id="3.30.2320.40:FF:000001">
    <property type="entry name" value="Capsid vertex protein"/>
    <property type="match status" value="1"/>
</dbReference>
<dbReference type="Gene3D" id="2.10.10.40">
    <property type="match status" value="1"/>
</dbReference>
<dbReference type="Gene3D" id="3.30.2320.40">
    <property type="match status" value="1"/>
</dbReference>
<dbReference type="HAMAP" id="MF_04113">
    <property type="entry name" value="CAPSID_P_T4"/>
    <property type="match status" value="1"/>
</dbReference>
<dbReference type="InterPro" id="IPR038999">
    <property type="entry name" value="CAPSP"/>
</dbReference>
<dbReference type="InterPro" id="IPR010762">
    <property type="entry name" value="Gp23/Gp24_T4-like"/>
</dbReference>
<dbReference type="Pfam" id="PF07068">
    <property type="entry name" value="Gp23"/>
    <property type="match status" value="1"/>
</dbReference>
<protein>
    <recommendedName>
        <fullName evidence="1 2">Capsid vertex protein</fullName>
    </recommendedName>
    <alternativeName>
        <fullName evidence="1">Gene product 24</fullName>
    </alternativeName>
    <alternativeName>
        <fullName evidence="1 2">gp24</fullName>
    </alternativeName>
    <component>
        <recommendedName>
            <fullName evidence="2">Mature capsid vertex protein</fullName>
        </recommendedName>
        <alternativeName>
            <fullName evidence="2">gp24*</fullName>
        </alternativeName>
    </component>
</protein>